<sequence>MTENMIVIYHNPDCGTSRNVLQLIEAAGYLPQVIEYVKEGWTKPQLLGLFAAADLTPRSALRTTKSPAAELNLLEETVTDAQILDAMVEYPILVNRPIVCTPKGVRLCRPSEVVLDLLDHWPSGPFAKEDGELIIDERGNRVYT</sequence>
<protein>
    <recommendedName>
        <fullName>Arsenate reductase ArsI1</fullName>
        <ecNumber evidence="3">1.20.4.1</ecNumber>
    </recommendedName>
</protein>
<evidence type="ECO:0000250" key="1">
    <source>
        <dbReference type="UniProtKB" id="P08692"/>
    </source>
</evidence>
<evidence type="ECO:0000255" key="2">
    <source>
        <dbReference type="PROSITE-ProRule" id="PRU01282"/>
    </source>
</evidence>
<evidence type="ECO:0000269" key="3">
    <source>
    </source>
</evidence>
<evidence type="ECO:0000303" key="4">
    <source>
    </source>
</evidence>
<evidence type="ECO:0000305" key="5"/>
<feature type="chain" id="PRO_0000429128" description="Arsenate reductase ArsI1">
    <location>
        <begin position="1"/>
        <end position="144"/>
    </location>
</feature>
<feature type="active site" description="Nucleophile; cysteine thioarsenate intermediate" evidence="1 2">
    <location>
        <position position="14"/>
    </location>
</feature>
<feature type="site" description="Important for activity" evidence="1">
    <location>
        <position position="10"/>
    </location>
</feature>
<feature type="site" description="Important for activity" evidence="1">
    <location>
        <position position="62"/>
    </location>
</feature>
<feature type="site" description="Important for activity" evidence="1">
    <location>
        <position position="96"/>
    </location>
</feature>
<feature type="site" description="Important for activity" evidence="1">
    <location>
        <position position="109"/>
    </location>
</feature>
<proteinExistence type="evidence at protein level"/>
<name>ARSI1_SYNY3</name>
<comment type="function">
    <text evidence="3">Catalyzes the reduction of arsenate [As(V)] to arsenite [As(III)]. Does not constitute the major arsenate reductase in cells: essential only in the absence of ArsC (AC P74313).</text>
</comment>
<comment type="catalytic activity">
    <reaction evidence="3">
        <text>[glutaredoxin]-dithiol + arsenate + glutathione + H(+) = glutathionyl-S-S-[glutaredoxin] + arsenite + H2O</text>
        <dbReference type="Rhea" id="RHEA:22016"/>
        <dbReference type="Rhea" id="RHEA-COMP:10729"/>
        <dbReference type="Rhea" id="RHEA-COMP:17668"/>
        <dbReference type="ChEBI" id="CHEBI:15377"/>
        <dbReference type="ChEBI" id="CHEBI:15378"/>
        <dbReference type="ChEBI" id="CHEBI:29242"/>
        <dbReference type="ChEBI" id="CHEBI:29950"/>
        <dbReference type="ChEBI" id="CHEBI:48597"/>
        <dbReference type="ChEBI" id="CHEBI:57925"/>
        <dbReference type="ChEBI" id="CHEBI:146199"/>
        <dbReference type="EC" id="1.20.4.1"/>
    </reaction>
</comment>
<comment type="similarity">
    <text evidence="5">Belongs to the ArsC family.</text>
</comment>
<geneLocation type="plasmid">
    <name>pSYSM</name>
</geneLocation>
<keyword id="KW-0560">Oxidoreductase</keyword>
<keyword id="KW-0614">Plasmid</keyword>
<keyword id="KW-1185">Reference proteome</keyword>
<reference key="1">
    <citation type="journal article" date="2003" name="DNA Res.">
        <title>Structural analysis of four large plasmids harboring in a unicellular cyanobacterium, Synechocystis sp. PCC 6803.</title>
        <authorList>
            <person name="Kaneko T."/>
            <person name="Nakamura Y."/>
            <person name="Sasamoto S."/>
            <person name="Watanabe A."/>
            <person name="Kohara M."/>
            <person name="Matsumoto M."/>
            <person name="Shimpo S."/>
            <person name="Yamada M."/>
            <person name="Tabata S."/>
        </authorList>
    </citation>
    <scope>NUCLEOTIDE SEQUENCE [LARGE SCALE GENOMIC DNA]</scope>
    <source>
        <strain>ATCC 27184 / PCC 6803 / Kazusa</strain>
        <plasmid>pSYSM</plasmid>
    </source>
</reference>
<reference key="2">
    <citation type="journal article" date="2009" name="J. Bacteriol.">
        <title>The glutathione/glutaredoxin system is essential for arsenate reduction in Synechocystis sp. strain PCC 6803.</title>
        <authorList>
            <person name="Lopez-Maury L."/>
            <person name="Sanchez-Riego A.M."/>
            <person name="Reyes J.C."/>
            <person name="Florencio F.J."/>
        </authorList>
    </citation>
    <scope>FUNCTION</scope>
    <scope>CATALYTIC ACTIVITY</scope>
    <source>
        <strain>ATCC 27184 / PCC 6803 / N-1</strain>
    </source>
</reference>
<organism>
    <name type="scientific">Synechocystis sp. (strain ATCC 27184 / PCC 6803 / Kazusa)</name>
    <dbReference type="NCBI Taxonomy" id="1111708"/>
    <lineage>
        <taxon>Bacteria</taxon>
        <taxon>Bacillati</taxon>
        <taxon>Cyanobacteriota</taxon>
        <taxon>Cyanophyceae</taxon>
        <taxon>Synechococcales</taxon>
        <taxon>Merismopediaceae</taxon>
        <taxon>Synechocystis</taxon>
    </lineage>
</organism>
<accession>Q6ZEM6</accession>
<dbReference type="EC" id="1.20.4.1" evidence="3"/>
<dbReference type="EMBL" id="AP004310">
    <property type="protein sequence ID" value="BAD01874.1"/>
    <property type="molecule type" value="Genomic_DNA"/>
</dbReference>
<dbReference type="SMR" id="Q6ZEM6"/>
<dbReference type="EnsemblBacteria" id="BAD01874">
    <property type="protein sequence ID" value="BAD01874"/>
    <property type="gene ID" value="BAD01874"/>
</dbReference>
<dbReference type="KEGG" id="syn:sll5104"/>
<dbReference type="InParanoid" id="Q6ZEM6"/>
<dbReference type="PhylomeDB" id="Q6ZEM6"/>
<dbReference type="Proteomes" id="UP000001425">
    <property type="component" value="Plasmid pSYSM"/>
</dbReference>
<dbReference type="GO" id="GO:0008794">
    <property type="term" value="F:arsenate reductase (glutaredoxin) activity"/>
    <property type="evidence" value="ECO:0007669"/>
    <property type="project" value="UniProtKB-EC"/>
</dbReference>
<dbReference type="GO" id="GO:0046685">
    <property type="term" value="P:response to arsenic-containing substance"/>
    <property type="evidence" value="ECO:0000318"/>
    <property type="project" value="GO_Central"/>
</dbReference>
<dbReference type="CDD" id="cd03034">
    <property type="entry name" value="ArsC_ArsC"/>
    <property type="match status" value="1"/>
</dbReference>
<dbReference type="Gene3D" id="3.40.30.10">
    <property type="entry name" value="Glutaredoxin"/>
    <property type="match status" value="1"/>
</dbReference>
<dbReference type="InterPro" id="IPR006659">
    <property type="entry name" value="Arsenate_reductase"/>
</dbReference>
<dbReference type="InterPro" id="IPR006660">
    <property type="entry name" value="Arsenate_reductase-like"/>
</dbReference>
<dbReference type="InterPro" id="IPR036249">
    <property type="entry name" value="Thioredoxin-like_sf"/>
</dbReference>
<dbReference type="PANTHER" id="PTHR30041">
    <property type="entry name" value="ARSENATE REDUCTASE"/>
    <property type="match status" value="1"/>
</dbReference>
<dbReference type="PANTHER" id="PTHR30041:SF5">
    <property type="entry name" value="ARSENATE REDUCTASE-RELATED"/>
    <property type="match status" value="1"/>
</dbReference>
<dbReference type="Pfam" id="PF03960">
    <property type="entry name" value="ArsC"/>
    <property type="match status" value="1"/>
</dbReference>
<dbReference type="SUPFAM" id="SSF52833">
    <property type="entry name" value="Thioredoxin-like"/>
    <property type="match status" value="1"/>
</dbReference>
<dbReference type="PROSITE" id="PS51353">
    <property type="entry name" value="ARSC"/>
    <property type="match status" value="1"/>
</dbReference>
<gene>
    <name evidence="4" type="primary">arsI1</name>
    <name type="ordered locus">sll5104</name>
</gene>